<dbReference type="EMBL" id="CP000668">
    <property type="protein sequence ID" value="ABP38559.1"/>
    <property type="molecule type" value="Genomic_DNA"/>
</dbReference>
<dbReference type="RefSeq" id="WP_002213430.1">
    <property type="nucleotide sequence ID" value="NZ_CP009715.1"/>
</dbReference>
<dbReference type="SMR" id="A4TGZ6"/>
<dbReference type="GeneID" id="97454235"/>
<dbReference type="KEGG" id="ypp:YPDSF_0137"/>
<dbReference type="PATRIC" id="fig|386656.14.peg.430"/>
<dbReference type="GO" id="GO:0005737">
    <property type="term" value="C:cytoplasm"/>
    <property type="evidence" value="ECO:0007669"/>
    <property type="project" value="UniProtKB-ARBA"/>
</dbReference>
<dbReference type="GO" id="GO:0015935">
    <property type="term" value="C:small ribosomal subunit"/>
    <property type="evidence" value="ECO:0007669"/>
    <property type="project" value="InterPro"/>
</dbReference>
<dbReference type="GO" id="GO:0019843">
    <property type="term" value="F:rRNA binding"/>
    <property type="evidence" value="ECO:0007669"/>
    <property type="project" value="UniProtKB-UniRule"/>
</dbReference>
<dbReference type="GO" id="GO:0003735">
    <property type="term" value="F:structural constituent of ribosome"/>
    <property type="evidence" value="ECO:0007669"/>
    <property type="project" value="InterPro"/>
</dbReference>
<dbReference type="GO" id="GO:0000028">
    <property type="term" value="P:ribosomal small subunit assembly"/>
    <property type="evidence" value="ECO:0007669"/>
    <property type="project" value="TreeGrafter"/>
</dbReference>
<dbReference type="GO" id="GO:0006412">
    <property type="term" value="P:translation"/>
    <property type="evidence" value="ECO:0007669"/>
    <property type="project" value="UniProtKB-UniRule"/>
</dbReference>
<dbReference type="FunFam" id="3.30.860.10:FF:000001">
    <property type="entry name" value="30S ribosomal protein S19"/>
    <property type="match status" value="1"/>
</dbReference>
<dbReference type="Gene3D" id="3.30.860.10">
    <property type="entry name" value="30s Ribosomal Protein S19, Chain A"/>
    <property type="match status" value="1"/>
</dbReference>
<dbReference type="HAMAP" id="MF_00531">
    <property type="entry name" value="Ribosomal_uS19"/>
    <property type="match status" value="1"/>
</dbReference>
<dbReference type="InterPro" id="IPR002222">
    <property type="entry name" value="Ribosomal_uS19"/>
</dbReference>
<dbReference type="InterPro" id="IPR005732">
    <property type="entry name" value="Ribosomal_uS19_bac-type"/>
</dbReference>
<dbReference type="InterPro" id="IPR020934">
    <property type="entry name" value="Ribosomal_uS19_CS"/>
</dbReference>
<dbReference type="InterPro" id="IPR023575">
    <property type="entry name" value="Ribosomal_uS19_SF"/>
</dbReference>
<dbReference type="NCBIfam" id="TIGR01050">
    <property type="entry name" value="rpsS_bact"/>
    <property type="match status" value="1"/>
</dbReference>
<dbReference type="PANTHER" id="PTHR11880">
    <property type="entry name" value="RIBOSOMAL PROTEIN S19P FAMILY MEMBER"/>
    <property type="match status" value="1"/>
</dbReference>
<dbReference type="PANTHER" id="PTHR11880:SF8">
    <property type="entry name" value="SMALL RIBOSOMAL SUBUNIT PROTEIN US19M"/>
    <property type="match status" value="1"/>
</dbReference>
<dbReference type="Pfam" id="PF00203">
    <property type="entry name" value="Ribosomal_S19"/>
    <property type="match status" value="1"/>
</dbReference>
<dbReference type="PIRSF" id="PIRSF002144">
    <property type="entry name" value="Ribosomal_S19"/>
    <property type="match status" value="1"/>
</dbReference>
<dbReference type="PRINTS" id="PR00975">
    <property type="entry name" value="RIBOSOMALS19"/>
</dbReference>
<dbReference type="SUPFAM" id="SSF54570">
    <property type="entry name" value="Ribosomal protein S19"/>
    <property type="match status" value="1"/>
</dbReference>
<dbReference type="PROSITE" id="PS00323">
    <property type="entry name" value="RIBOSOMAL_S19"/>
    <property type="match status" value="1"/>
</dbReference>
<feature type="chain" id="PRO_1000051146" description="Small ribosomal subunit protein uS19">
    <location>
        <begin position="1"/>
        <end position="92"/>
    </location>
</feature>
<accession>A4TGZ6</accession>
<name>RS19_YERPP</name>
<organism>
    <name type="scientific">Yersinia pestis (strain Pestoides F)</name>
    <dbReference type="NCBI Taxonomy" id="386656"/>
    <lineage>
        <taxon>Bacteria</taxon>
        <taxon>Pseudomonadati</taxon>
        <taxon>Pseudomonadota</taxon>
        <taxon>Gammaproteobacteria</taxon>
        <taxon>Enterobacterales</taxon>
        <taxon>Yersiniaceae</taxon>
        <taxon>Yersinia</taxon>
    </lineage>
</organism>
<sequence length="92" mass="10430">MPRSLKKGPFIDLHLLKKVEKAVESGDKKPIRTWSRRSTVFPNMIGLTIAVHNGRQHVPVFVSDEMVGHKLGEFAPTRTYRGHAADKKAKKR</sequence>
<reference key="1">
    <citation type="submission" date="2007-02" db="EMBL/GenBank/DDBJ databases">
        <title>Complete sequence of chromosome of Yersinia pestis Pestoides F.</title>
        <authorList>
            <consortium name="US DOE Joint Genome Institute"/>
            <person name="Copeland A."/>
            <person name="Lucas S."/>
            <person name="Lapidus A."/>
            <person name="Barry K."/>
            <person name="Detter J.C."/>
            <person name="Glavina del Rio T."/>
            <person name="Hammon N."/>
            <person name="Israni S."/>
            <person name="Dalin E."/>
            <person name="Tice H."/>
            <person name="Pitluck S."/>
            <person name="Di Bartolo G."/>
            <person name="Chain P."/>
            <person name="Malfatti S."/>
            <person name="Shin M."/>
            <person name="Vergez L."/>
            <person name="Schmutz J."/>
            <person name="Larimer F."/>
            <person name="Land M."/>
            <person name="Hauser L."/>
            <person name="Worsham P."/>
            <person name="Chu M."/>
            <person name="Bearden S."/>
            <person name="Garcia E."/>
            <person name="Richardson P."/>
        </authorList>
    </citation>
    <scope>NUCLEOTIDE SEQUENCE [LARGE SCALE GENOMIC DNA]</scope>
    <source>
        <strain>Pestoides F</strain>
    </source>
</reference>
<evidence type="ECO:0000255" key="1">
    <source>
        <dbReference type="HAMAP-Rule" id="MF_00531"/>
    </source>
</evidence>
<evidence type="ECO:0000305" key="2"/>
<gene>
    <name evidence="1" type="primary">rpsS</name>
    <name type="ordered locus">YPDSF_0137</name>
</gene>
<protein>
    <recommendedName>
        <fullName evidence="1">Small ribosomal subunit protein uS19</fullName>
    </recommendedName>
    <alternativeName>
        <fullName evidence="2">30S ribosomal protein S19</fullName>
    </alternativeName>
</protein>
<keyword id="KW-0687">Ribonucleoprotein</keyword>
<keyword id="KW-0689">Ribosomal protein</keyword>
<keyword id="KW-0694">RNA-binding</keyword>
<keyword id="KW-0699">rRNA-binding</keyword>
<proteinExistence type="inferred from homology"/>
<comment type="function">
    <text evidence="1">Protein S19 forms a complex with S13 that binds strongly to the 16S ribosomal RNA.</text>
</comment>
<comment type="similarity">
    <text evidence="1">Belongs to the universal ribosomal protein uS19 family.</text>
</comment>